<name>TBG1_RAT</name>
<dbReference type="EMBL" id="AB015946">
    <property type="protein sequence ID" value="BAA36504.1"/>
    <property type="molecule type" value="mRNA"/>
</dbReference>
<dbReference type="EMBL" id="BC070957">
    <property type="protein sequence ID" value="AAH70957.1"/>
    <property type="molecule type" value="mRNA"/>
</dbReference>
<dbReference type="RefSeq" id="NP_665721.1">
    <property type="nucleotide sequence ID" value="NM_145778.2"/>
</dbReference>
<dbReference type="SMR" id="P83888"/>
<dbReference type="BioGRID" id="251670">
    <property type="interactions" value="3"/>
</dbReference>
<dbReference type="FunCoup" id="P83888">
    <property type="interactions" value="3632"/>
</dbReference>
<dbReference type="IntAct" id="P83888">
    <property type="interactions" value="1"/>
</dbReference>
<dbReference type="STRING" id="10116.ENSRNOP00000027370"/>
<dbReference type="PhosphoSitePlus" id="P83888"/>
<dbReference type="jPOST" id="P83888"/>
<dbReference type="PaxDb" id="10116-ENSRNOP00000027370"/>
<dbReference type="Ensembl" id="ENSRNOT00000027370.6">
    <property type="protein sequence ID" value="ENSRNOP00000027370.4"/>
    <property type="gene ID" value="ENSRNOG00000020213.6"/>
</dbReference>
<dbReference type="GeneID" id="252921"/>
<dbReference type="KEGG" id="rno:252921"/>
<dbReference type="UCSC" id="RGD:628606">
    <property type="organism name" value="rat"/>
</dbReference>
<dbReference type="AGR" id="RGD:628606"/>
<dbReference type="CTD" id="7283"/>
<dbReference type="RGD" id="628606">
    <property type="gene designation" value="Tubg1"/>
</dbReference>
<dbReference type="eggNOG" id="KOG1374">
    <property type="taxonomic scope" value="Eukaryota"/>
</dbReference>
<dbReference type="GeneTree" id="ENSGT00940000156957"/>
<dbReference type="HOGENOM" id="CLU_015718_1_0_1"/>
<dbReference type="InParanoid" id="P83888"/>
<dbReference type="OMA" id="HRYISIL"/>
<dbReference type="OrthoDB" id="10249382at2759"/>
<dbReference type="PhylomeDB" id="P83888"/>
<dbReference type="TreeFam" id="TF300477"/>
<dbReference type="Reactome" id="R-RNO-2565942">
    <property type="pathway name" value="Regulation of PLK1 Activity at G2/M Transition"/>
</dbReference>
<dbReference type="Reactome" id="R-RNO-380259">
    <property type="pathway name" value="Loss of Nlp from mitotic centrosomes"/>
</dbReference>
<dbReference type="Reactome" id="R-RNO-380270">
    <property type="pathway name" value="Recruitment of mitotic centrosome proteins and complexes"/>
</dbReference>
<dbReference type="Reactome" id="R-RNO-380284">
    <property type="pathway name" value="Loss of proteins required for interphase microtubule organization from the centrosome"/>
</dbReference>
<dbReference type="Reactome" id="R-RNO-380320">
    <property type="pathway name" value="Recruitment of NuMA to mitotic centrosomes"/>
</dbReference>
<dbReference type="Reactome" id="R-RNO-5620912">
    <property type="pathway name" value="Anchoring of the basal body to the plasma membrane"/>
</dbReference>
<dbReference type="Reactome" id="R-RNO-8854518">
    <property type="pathway name" value="AURKA Activation by TPX2"/>
</dbReference>
<dbReference type="PRO" id="PR:P83888"/>
<dbReference type="Proteomes" id="UP000002494">
    <property type="component" value="Chromosome 10"/>
</dbReference>
<dbReference type="Bgee" id="ENSRNOG00000020213">
    <property type="expression patterns" value="Expressed in testis and 20 other cell types or tissues"/>
</dbReference>
<dbReference type="GO" id="GO:0045177">
    <property type="term" value="C:apical part of cell"/>
    <property type="evidence" value="ECO:0000266"/>
    <property type="project" value="RGD"/>
</dbReference>
<dbReference type="GO" id="GO:0031252">
    <property type="term" value="C:cell leading edge"/>
    <property type="evidence" value="ECO:0000266"/>
    <property type="project" value="RGD"/>
</dbReference>
<dbReference type="GO" id="GO:0005814">
    <property type="term" value="C:centriole"/>
    <property type="evidence" value="ECO:0000266"/>
    <property type="project" value="RGD"/>
</dbReference>
<dbReference type="GO" id="GO:0005813">
    <property type="term" value="C:centrosome"/>
    <property type="evidence" value="ECO:0000250"/>
    <property type="project" value="UniProtKB"/>
</dbReference>
<dbReference type="GO" id="GO:0036064">
    <property type="term" value="C:ciliary basal body"/>
    <property type="evidence" value="ECO:0000266"/>
    <property type="project" value="RGD"/>
</dbReference>
<dbReference type="GO" id="GO:0005929">
    <property type="term" value="C:cilium"/>
    <property type="evidence" value="ECO:0000266"/>
    <property type="project" value="RGD"/>
</dbReference>
<dbReference type="GO" id="GO:0000794">
    <property type="term" value="C:condensed nuclear chromosome"/>
    <property type="evidence" value="ECO:0000266"/>
    <property type="project" value="RGD"/>
</dbReference>
<dbReference type="GO" id="GO:0005737">
    <property type="term" value="C:cytoplasm"/>
    <property type="evidence" value="ECO:0000250"/>
    <property type="project" value="UniProtKB"/>
</dbReference>
<dbReference type="GO" id="GO:0005881">
    <property type="term" value="C:cytoplasmic microtubule"/>
    <property type="evidence" value="ECO:0000266"/>
    <property type="project" value="RGD"/>
</dbReference>
<dbReference type="GO" id="GO:0000930">
    <property type="term" value="C:gamma-tubulin complex"/>
    <property type="evidence" value="ECO:0000314"/>
    <property type="project" value="RGD"/>
</dbReference>
<dbReference type="GO" id="GO:0000931">
    <property type="term" value="C:gamma-tubulin ring complex"/>
    <property type="evidence" value="ECO:0000318"/>
    <property type="project" value="GO_Central"/>
</dbReference>
<dbReference type="GO" id="GO:0005815">
    <property type="term" value="C:microtubule organizing center"/>
    <property type="evidence" value="ECO:0000304"/>
    <property type="project" value="RGD"/>
</dbReference>
<dbReference type="GO" id="GO:1990498">
    <property type="term" value="C:mitotic spindle microtubule"/>
    <property type="evidence" value="ECO:0000250"/>
    <property type="project" value="UniProtKB"/>
</dbReference>
<dbReference type="GO" id="GO:0043005">
    <property type="term" value="C:neuron projection"/>
    <property type="evidence" value="ECO:0000266"/>
    <property type="project" value="RGD"/>
</dbReference>
<dbReference type="GO" id="GO:0097730">
    <property type="term" value="C:non-motile cilium"/>
    <property type="evidence" value="ECO:0000266"/>
    <property type="project" value="RGD"/>
</dbReference>
<dbReference type="GO" id="GO:0005634">
    <property type="term" value="C:nucleus"/>
    <property type="evidence" value="ECO:0000318"/>
    <property type="project" value="GO_Central"/>
</dbReference>
<dbReference type="GO" id="GO:0000242">
    <property type="term" value="C:pericentriolar material"/>
    <property type="evidence" value="ECO:0000266"/>
    <property type="project" value="RGD"/>
</dbReference>
<dbReference type="GO" id="GO:0005827">
    <property type="term" value="C:polar microtubule"/>
    <property type="evidence" value="ECO:0000250"/>
    <property type="project" value="UniProtKB"/>
</dbReference>
<dbReference type="GO" id="GO:0055037">
    <property type="term" value="C:recycling endosome"/>
    <property type="evidence" value="ECO:0000266"/>
    <property type="project" value="RGD"/>
</dbReference>
<dbReference type="GO" id="GO:0005819">
    <property type="term" value="C:spindle"/>
    <property type="evidence" value="ECO:0000318"/>
    <property type="project" value="GO_Central"/>
</dbReference>
<dbReference type="GO" id="GO:0005876">
    <property type="term" value="C:spindle microtubule"/>
    <property type="evidence" value="ECO:0000266"/>
    <property type="project" value="RGD"/>
</dbReference>
<dbReference type="GO" id="GO:0005525">
    <property type="term" value="F:GTP binding"/>
    <property type="evidence" value="ECO:0000318"/>
    <property type="project" value="GO_Central"/>
</dbReference>
<dbReference type="GO" id="GO:0042802">
    <property type="term" value="F:identical protein binding"/>
    <property type="evidence" value="ECO:0000266"/>
    <property type="project" value="RGD"/>
</dbReference>
<dbReference type="GO" id="GO:0140490">
    <property type="term" value="F:microtubule nucleator activity"/>
    <property type="evidence" value="ECO:0000318"/>
    <property type="project" value="GO_Central"/>
</dbReference>
<dbReference type="GO" id="GO:0031122">
    <property type="term" value="P:cytoplasmic microtubule organization"/>
    <property type="evidence" value="ECO:0007669"/>
    <property type="project" value="InterPro"/>
</dbReference>
<dbReference type="GO" id="GO:0000212">
    <property type="term" value="P:meiotic spindle organization"/>
    <property type="evidence" value="ECO:0000266"/>
    <property type="project" value="RGD"/>
</dbReference>
<dbReference type="GO" id="GO:0007020">
    <property type="term" value="P:microtubule nucleation"/>
    <property type="evidence" value="ECO:0000318"/>
    <property type="project" value="GO_Central"/>
</dbReference>
<dbReference type="GO" id="GO:0000278">
    <property type="term" value="P:mitotic cell cycle"/>
    <property type="evidence" value="ECO:0000318"/>
    <property type="project" value="GO_Central"/>
</dbReference>
<dbReference type="GO" id="GO:0000070">
    <property type="term" value="P:mitotic sister chromatid segregation"/>
    <property type="evidence" value="ECO:0000318"/>
    <property type="project" value="GO_Central"/>
</dbReference>
<dbReference type="GO" id="GO:0007052">
    <property type="term" value="P:mitotic spindle organization"/>
    <property type="evidence" value="ECO:0000318"/>
    <property type="project" value="GO_Central"/>
</dbReference>
<dbReference type="CDD" id="cd02188">
    <property type="entry name" value="gamma_tubulin"/>
    <property type="match status" value="1"/>
</dbReference>
<dbReference type="FunFam" id="1.10.287.600:FF:000004">
    <property type="entry name" value="Tubulin gamma chain"/>
    <property type="match status" value="1"/>
</dbReference>
<dbReference type="FunFam" id="3.30.1330.20:FF:000003">
    <property type="entry name" value="Tubulin gamma chain"/>
    <property type="match status" value="1"/>
</dbReference>
<dbReference type="FunFam" id="3.40.50.1440:FF:000010">
    <property type="entry name" value="Tubulin gamma chain"/>
    <property type="match status" value="1"/>
</dbReference>
<dbReference type="Gene3D" id="1.10.287.600">
    <property type="entry name" value="Helix hairpin bin"/>
    <property type="match status" value="1"/>
</dbReference>
<dbReference type="Gene3D" id="3.30.1330.20">
    <property type="entry name" value="Tubulin/FtsZ, C-terminal domain"/>
    <property type="match status" value="1"/>
</dbReference>
<dbReference type="Gene3D" id="3.40.50.1440">
    <property type="entry name" value="Tubulin/FtsZ, GTPase domain"/>
    <property type="match status" value="1"/>
</dbReference>
<dbReference type="InterPro" id="IPR002454">
    <property type="entry name" value="Gamma_tubulin"/>
</dbReference>
<dbReference type="InterPro" id="IPR008280">
    <property type="entry name" value="Tub_FtsZ_C"/>
</dbReference>
<dbReference type="InterPro" id="IPR000217">
    <property type="entry name" value="Tubulin"/>
</dbReference>
<dbReference type="InterPro" id="IPR037103">
    <property type="entry name" value="Tubulin/FtsZ-like_C"/>
</dbReference>
<dbReference type="InterPro" id="IPR018316">
    <property type="entry name" value="Tubulin/FtsZ_2-layer-sand-dom"/>
</dbReference>
<dbReference type="InterPro" id="IPR036525">
    <property type="entry name" value="Tubulin/FtsZ_GTPase_sf"/>
</dbReference>
<dbReference type="InterPro" id="IPR023123">
    <property type="entry name" value="Tubulin_C"/>
</dbReference>
<dbReference type="InterPro" id="IPR017975">
    <property type="entry name" value="Tubulin_CS"/>
</dbReference>
<dbReference type="InterPro" id="IPR003008">
    <property type="entry name" value="Tubulin_FtsZ_GTPase"/>
</dbReference>
<dbReference type="PANTHER" id="PTHR11588">
    <property type="entry name" value="TUBULIN"/>
    <property type="match status" value="1"/>
</dbReference>
<dbReference type="Pfam" id="PF00091">
    <property type="entry name" value="Tubulin"/>
    <property type="match status" value="1"/>
</dbReference>
<dbReference type="Pfam" id="PF03953">
    <property type="entry name" value="Tubulin_C"/>
    <property type="match status" value="1"/>
</dbReference>
<dbReference type="PRINTS" id="PR01164">
    <property type="entry name" value="GAMMATUBULIN"/>
</dbReference>
<dbReference type="PRINTS" id="PR01161">
    <property type="entry name" value="TUBULIN"/>
</dbReference>
<dbReference type="SMART" id="SM00864">
    <property type="entry name" value="Tubulin"/>
    <property type="match status" value="1"/>
</dbReference>
<dbReference type="SMART" id="SM00865">
    <property type="entry name" value="Tubulin_C"/>
    <property type="match status" value="1"/>
</dbReference>
<dbReference type="SUPFAM" id="SSF55307">
    <property type="entry name" value="Tubulin C-terminal domain-like"/>
    <property type="match status" value="1"/>
</dbReference>
<dbReference type="SUPFAM" id="SSF52490">
    <property type="entry name" value="Tubulin nucleotide-binding domain-like"/>
    <property type="match status" value="1"/>
</dbReference>
<dbReference type="PROSITE" id="PS00227">
    <property type="entry name" value="TUBULIN"/>
    <property type="match status" value="1"/>
</dbReference>
<accession>P83888</accession>
<accession>Q9Z310</accession>
<keyword id="KW-0963">Cytoplasm</keyword>
<keyword id="KW-0206">Cytoskeleton</keyword>
<keyword id="KW-0342">GTP-binding</keyword>
<keyword id="KW-0493">Microtubule</keyword>
<keyword id="KW-0547">Nucleotide-binding</keyword>
<keyword id="KW-0597">Phosphoprotein</keyword>
<keyword id="KW-1185">Reference proteome</keyword>
<organism>
    <name type="scientific">Rattus norvegicus</name>
    <name type="common">Rat</name>
    <dbReference type="NCBI Taxonomy" id="10116"/>
    <lineage>
        <taxon>Eukaryota</taxon>
        <taxon>Metazoa</taxon>
        <taxon>Chordata</taxon>
        <taxon>Craniata</taxon>
        <taxon>Vertebrata</taxon>
        <taxon>Euteleostomi</taxon>
        <taxon>Mammalia</taxon>
        <taxon>Eutheria</taxon>
        <taxon>Euarchontoglires</taxon>
        <taxon>Glires</taxon>
        <taxon>Rodentia</taxon>
        <taxon>Myomorpha</taxon>
        <taxon>Muroidea</taxon>
        <taxon>Muridae</taxon>
        <taxon>Murinae</taxon>
        <taxon>Rattus</taxon>
    </lineage>
</organism>
<reference key="1">
    <citation type="journal article" date="1999" name="DNA Res.">
        <title>Structure of rat gamma-tubulin and its binding to HP33.</title>
        <authorList>
            <person name="Nakadai T."/>
            <person name="Okada N."/>
            <person name="Makino Y."/>
            <person name="Tamura T."/>
        </authorList>
    </citation>
    <scope>NUCLEOTIDE SEQUENCE [MRNA]</scope>
</reference>
<reference key="2">
    <citation type="journal article" date="2004" name="Genome Res.">
        <title>The status, quality, and expansion of the NIH full-length cDNA project: the Mammalian Gene Collection (MGC).</title>
        <authorList>
            <consortium name="The MGC Project Team"/>
        </authorList>
    </citation>
    <scope>NUCLEOTIDE SEQUENCE [LARGE SCALE MRNA]</scope>
    <source>
        <tissue>Heart</tissue>
    </source>
</reference>
<reference key="3">
    <citation type="journal article" date="2004" name="Nat. Cell Biol.">
        <title>Dynamin 2 binds gamma-tubulin and participates in centrosome cohesion.</title>
        <authorList>
            <person name="Thompson H.M."/>
            <person name="Cao H."/>
            <person name="Chen J."/>
            <person name="Euteneuer U."/>
            <person name="McNiven M.A."/>
        </authorList>
    </citation>
    <scope>INTERACTION WITH DNM2</scope>
</reference>
<gene>
    <name evidence="7" type="primary">Tubg1</name>
    <name type="synonym">Tubg</name>
</gene>
<proteinExistence type="evidence at protein level"/>
<feature type="chain" id="PRO_0000048467" description="Tubulin gamma-1 chain">
    <location>
        <begin position="1"/>
        <end position="451"/>
    </location>
</feature>
<feature type="binding site" evidence="4">
    <location>
        <begin position="142"/>
        <end position="148"/>
    </location>
    <ligand>
        <name>GTP</name>
        <dbReference type="ChEBI" id="CHEBI:37565"/>
    </ligand>
</feature>
<feature type="modified residue" description="Phosphoserine; by BRSK1" evidence="3">
    <location>
        <position position="131"/>
    </location>
</feature>
<evidence type="ECO:0000250" key="1"/>
<evidence type="ECO:0000250" key="2">
    <source>
        <dbReference type="UniProtKB" id="P23258"/>
    </source>
</evidence>
<evidence type="ECO:0000250" key="3">
    <source>
        <dbReference type="UniProtKB" id="P83887"/>
    </source>
</evidence>
<evidence type="ECO:0000255" key="4"/>
<evidence type="ECO:0000269" key="5">
    <source>
    </source>
</evidence>
<evidence type="ECO:0000305" key="6"/>
<evidence type="ECO:0000312" key="7">
    <source>
        <dbReference type="RGD" id="628606"/>
    </source>
</evidence>
<sequence length="451" mass="51101">MPREIITLQLGQCGNQIGFEFWKQLCAEHGISPEGIVEEFATEGTDRKDVFFYQADDEHYIPRAVLLDLEPRVIHSILNSSYAKLYNPENIYLSEHGGGAGNNWASGFSQGEKIHEDIFDIIDREADGSDSLEGFVLCHSIAGGTGSGLGSYLLERLNDRYPKKLVQTYSVFPNQDEMSDVVVQPYNSLLTLKRLTQNADCVVVLDNTALNLIATDRLHIQNPSFSQINQLVSTIMSASTTTLRYPGYMNNDLIGLIASLIPTPRLHFLMTGYTPLTTDQSVASVRKTTVLDVMRRLLQPKNVMVSTGRDRQTNHCYIAILNIIQGEVDPTQVHKSLQRIRERKLANFIPWGPASIQVALSRKSPYLPSAHRVSGLMMANHTSISSLFERTCRQFDKLRKREAFMEQFRKEDIFKDNFDEMDTSREIVQQLIDEYHAATRPDYISWGTQEQ</sequence>
<comment type="function">
    <text evidence="2">Tubulin is the major constituent of microtubules, protein filaments consisting of alpha- and beta-tubulin heterodimers (By similarity). Gamma-tubulin is a key component of the gamma-tubulin ring complex (gTuRC) which mediates microtubule nucleation (By similarity). The gTuRC regulates the minus-end nucleation of alpha-beta tubulin heterodimers that grow into microtubule protafilaments, a critical step in centrosome duplication and spindle formation (By similarity).</text>
</comment>
<comment type="subunit">
    <text evidence="2 3 5">Component of the gamma-tubulin ring complex (gTuRC) consisting of TUBGCP2, TUBGCP3, TUBGCP4, TUBGCP5 and TUBGCP6 and gamma-tubulin TUBG1 or TUBG2 (By similarity). TUBGCP2, TUBGCP3, TUBGCP4, TUBGCP5 and TUBGCP6 assemble in a 5:5:2:1:1 stoichiometry; each is associated with a gamma-tubulin, thereby arranging 14 gamma-tubulins in a helical manner (By similarity). Gamma-tubulin at the first position is blocked by TUBGCP3 at the last position, allowing 13 protafilaments to grow into a microtubule (By similarity). The gTuRC (via TUBGCP3 and TUBGCP6) interacts with ACTB and MZT1; the interactions form a luminal bridge that stabilizes the initial structure during complex assembly (By similarity). The gTuRC (via TUBGCP2) interacts with MZT2A/MZT2B and CDK5RAP2 (via CM1 motif); the interactions play a role in gTuRC activation (By similarity). Interacts with alpha-beta tubulin heterodimers; the interaction allows microtubules to nucleate from the gTuRC (By similarity). Interacts with B9D2 (By similarity). Interacts with CDK5RAP2; the interaction is leading to centrosomal localization of TUBG1 and CDK5RAP2 (By similarity). Interacts with CIMAP3 (By similarity). Interacts with SAS6 and NUP62 at the centrosome (By similarity). Interacts with EML3 (phosphorylated at 'Thr-881') and HAUS8 (By similarity). Interacts with DNM2; this interaction may participate in centrosome cohesion (PubMed:15048127). Interacts with CCDC66 (By similarity).</text>
</comment>
<comment type="subcellular location">
    <subcellularLocation>
        <location evidence="2">Cytoplasm</location>
        <location evidence="2">Cytoskeleton</location>
        <location evidence="2">Microtubule organizing center</location>
        <location evidence="2">Centrosome</location>
    </subcellularLocation>
    <subcellularLocation>
        <location evidence="2">Cytoplasm</location>
        <location evidence="2">Cytoskeleton</location>
        <location evidence="2">Spindle</location>
    </subcellularLocation>
    <text evidence="2">Localizes to mitotic spindle microtubules.</text>
</comment>
<comment type="PTM">
    <text evidence="1">Phosphorylation at Ser-131 by BRSK1 regulates centrosome duplication, possibly by mediating relocation of gamma-tubulin and its associated proteins from the cytoplasm to the centrosome.</text>
</comment>
<comment type="similarity">
    <text evidence="6">Belongs to the tubulin family.</text>
</comment>
<protein>
    <recommendedName>
        <fullName evidence="6">Tubulin gamma-1 chain</fullName>
    </recommendedName>
    <alternativeName>
        <fullName>Gamma-1-tubulin</fullName>
    </alternativeName>
    <alternativeName>
        <fullName>Gamma-tubulin complex component 1</fullName>
        <shortName>GCP-1</shortName>
    </alternativeName>
</protein>